<proteinExistence type="inferred from homology"/>
<comment type="function">
    <text evidence="1">Involved in the binding of tRNA to the ribosomes.</text>
</comment>
<comment type="subunit">
    <text evidence="1">Part of the 30S ribosomal subunit.</text>
</comment>
<comment type="similarity">
    <text evidence="1">Belongs to the universal ribosomal protein uS10 family.</text>
</comment>
<sequence>MVSMTSDRIRIKLKAYDYRILDKAVTEIVDTARNTGAAIAGPIPLPTQISRTTIQRSVHVDKKSREQFEMRIHKRLLDILEPTQQTVDALGKLSLPAGVDVEIKL</sequence>
<feature type="chain" id="PRO_1000206580" description="Small ribosomal subunit protein uS10">
    <location>
        <begin position="1"/>
        <end position="105"/>
    </location>
</feature>
<reference key="1">
    <citation type="submission" date="2009-06" db="EMBL/GenBank/DDBJ databases">
        <title>Complete sequence of Desulfovibrio salexigens DSM 2638.</title>
        <authorList>
            <consortium name="US DOE Joint Genome Institute"/>
            <person name="Lucas S."/>
            <person name="Copeland A."/>
            <person name="Lapidus A."/>
            <person name="Glavina del Rio T."/>
            <person name="Tice H."/>
            <person name="Bruce D."/>
            <person name="Goodwin L."/>
            <person name="Pitluck S."/>
            <person name="Munk A.C."/>
            <person name="Brettin T."/>
            <person name="Detter J.C."/>
            <person name="Han C."/>
            <person name="Tapia R."/>
            <person name="Larimer F."/>
            <person name="Land M."/>
            <person name="Hauser L."/>
            <person name="Kyrpides N."/>
            <person name="Anderson I."/>
            <person name="Wall J.D."/>
            <person name="Arkin A.P."/>
            <person name="Dehal P."/>
            <person name="Chivian D."/>
            <person name="Giles B."/>
            <person name="Hazen T.C."/>
        </authorList>
    </citation>
    <scope>NUCLEOTIDE SEQUENCE [LARGE SCALE GENOMIC DNA]</scope>
    <source>
        <strain>ATCC 14822 / DSM 2638 / NCIMB 8403 / VKM B-1763</strain>
    </source>
</reference>
<dbReference type="EMBL" id="CP001649">
    <property type="protein sequence ID" value="ACS79247.1"/>
    <property type="molecule type" value="Genomic_DNA"/>
</dbReference>
<dbReference type="RefSeq" id="WP_015851066.1">
    <property type="nucleotide sequence ID" value="NC_012881.1"/>
</dbReference>
<dbReference type="SMR" id="C6C184"/>
<dbReference type="STRING" id="526222.Desal_1184"/>
<dbReference type="KEGG" id="dsa:Desal_1184"/>
<dbReference type="eggNOG" id="COG0051">
    <property type="taxonomic scope" value="Bacteria"/>
</dbReference>
<dbReference type="HOGENOM" id="CLU_122625_1_3_7"/>
<dbReference type="OrthoDB" id="9804464at2"/>
<dbReference type="Proteomes" id="UP000002601">
    <property type="component" value="Chromosome"/>
</dbReference>
<dbReference type="GO" id="GO:1990904">
    <property type="term" value="C:ribonucleoprotein complex"/>
    <property type="evidence" value="ECO:0007669"/>
    <property type="project" value="UniProtKB-KW"/>
</dbReference>
<dbReference type="GO" id="GO:0005840">
    <property type="term" value="C:ribosome"/>
    <property type="evidence" value="ECO:0007669"/>
    <property type="project" value="UniProtKB-KW"/>
</dbReference>
<dbReference type="GO" id="GO:0003735">
    <property type="term" value="F:structural constituent of ribosome"/>
    <property type="evidence" value="ECO:0007669"/>
    <property type="project" value="InterPro"/>
</dbReference>
<dbReference type="GO" id="GO:0000049">
    <property type="term" value="F:tRNA binding"/>
    <property type="evidence" value="ECO:0007669"/>
    <property type="project" value="UniProtKB-UniRule"/>
</dbReference>
<dbReference type="GO" id="GO:0006412">
    <property type="term" value="P:translation"/>
    <property type="evidence" value="ECO:0007669"/>
    <property type="project" value="UniProtKB-UniRule"/>
</dbReference>
<dbReference type="FunFam" id="3.30.70.600:FF:000003">
    <property type="entry name" value="30S ribosomal protein S10"/>
    <property type="match status" value="1"/>
</dbReference>
<dbReference type="Gene3D" id="3.30.70.600">
    <property type="entry name" value="Ribosomal protein S10 domain"/>
    <property type="match status" value="1"/>
</dbReference>
<dbReference type="HAMAP" id="MF_00508">
    <property type="entry name" value="Ribosomal_uS10"/>
    <property type="match status" value="1"/>
</dbReference>
<dbReference type="InterPro" id="IPR001848">
    <property type="entry name" value="Ribosomal_uS10"/>
</dbReference>
<dbReference type="InterPro" id="IPR018268">
    <property type="entry name" value="Ribosomal_uS10_CS"/>
</dbReference>
<dbReference type="InterPro" id="IPR027486">
    <property type="entry name" value="Ribosomal_uS10_dom"/>
</dbReference>
<dbReference type="InterPro" id="IPR036838">
    <property type="entry name" value="Ribosomal_uS10_dom_sf"/>
</dbReference>
<dbReference type="NCBIfam" id="NF001861">
    <property type="entry name" value="PRK00596.1"/>
    <property type="match status" value="1"/>
</dbReference>
<dbReference type="NCBIfam" id="TIGR01049">
    <property type="entry name" value="rpsJ_bact"/>
    <property type="match status" value="1"/>
</dbReference>
<dbReference type="PANTHER" id="PTHR11700">
    <property type="entry name" value="30S RIBOSOMAL PROTEIN S10 FAMILY MEMBER"/>
    <property type="match status" value="1"/>
</dbReference>
<dbReference type="Pfam" id="PF00338">
    <property type="entry name" value="Ribosomal_S10"/>
    <property type="match status" value="1"/>
</dbReference>
<dbReference type="PRINTS" id="PR00971">
    <property type="entry name" value="RIBOSOMALS10"/>
</dbReference>
<dbReference type="SMART" id="SM01403">
    <property type="entry name" value="Ribosomal_S10"/>
    <property type="match status" value="1"/>
</dbReference>
<dbReference type="SUPFAM" id="SSF54999">
    <property type="entry name" value="Ribosomal protein S10"/>
    <property type="match status" value="1"/>
</dbReference>
<dbReference type="PROSITE" id="PS00361">
    <property type="entry name" value="RIBOSOMAL_S10"/>
    <property type="match status" value="1"/>
</dbReference>
<name>RS10_MARSD</name>
<gene>
    <name evidence="1" type="primary">rpsJ</name>
    <name type="ordered locus">Desal_1184</name>
</gene>
<keyword id="KW-1185">Reference proteome</keyword>
<keyword id="KW-0687">Ribonucleoprotein</keyword>
<keyword id="KW-0689">Ribosomal protein</keyword>
<protein>
    <recommendedName>
        <fullName evidence="1">Small ribosomal subunit protein uS10</fullName>
    </recommendedName>
    <alternativeName>
        <fullName evidence="2">30S ribosomal protein S10</fullName>
    </alternativeName>
</protein>
<accession>C6C184</accession>
<evidence type="ECO:0000255" key="1">
    <source>
        <dbReference type="HAMAP-Rule" id="MF_00508"/>
    </source>
</evidence>
<evidence type="ECO:0000305" key="2"/>
<organism>
    <name type="scientific">Maridesulfovibrio salexigens (strain ATCC 14822 / DSM 2638 / NCIMB 8403 / VKM B-1763)</name>
    <name type="common">Desulfovibrio salexigens</name>
    <dbReference type="NCBI Taxonomy" id="526222"/>
    <lineage>
        <taxon>Bacteria</taxon>
        <taxon>Pseudomonadati</taxon>
        <taxon>Thermodesulfobacteriota</taxon>
        <taxon>Desulfovibrionia</taxon>
        <taxon>Desulfovibrionales</taxon>
        <taxon>Desulfovibrionaceae</taxon>
        <taxon>Maridesulfovibrio</taxon>
    </lineage>
</organism>